<gene>
    <name evidence="1" type="primary">ureA</name>
    <name type="ordered locus">Psyr_4432</name>
</gene>
<accession>Q4ZN10</accession>
<proteinExistence type="inferred from homology"/>
<dbReference type="EC" id="3.5.1.5" evidence="1"/>
<dbReference type="EMBL" id="CP000075">
    <property type="protein sequence ID" value="AAY39462.1"/>
    <property type="molecule type" value="Genomic_DNA"/>
</dbReference>
<dbReference type="RefSeq" id="WP_003317023.1">
    <property type="nucleotide sequence ID" value="NC_007005.1"/>
</dbReference>
<dbReference type="RefSeq" id="YP_237500.1">
    <property type="nucleotide sequence ID" value="NC_007005.1"/>
</dbReference>
<dbReference type="SMR" id="Q4ZN10"/>
<dbReference type="STRING" id="205918.Psyr_4432"/>
<dbReference type="GeneID" id="65077006"/>
<dbReference type="KEGG" id="psb:Psyr_4432"/>
<dbReference type="PATRIC" id="fig|205918.7.peg.4574"/>
<dbReference type="eggNOG" id="COG0831">
    <property type="taxonomic scope" value="Bacteria"/>
</dbReference>
<dbReference type="HOGENOM" id="CLU_145825_1_0_6"/>
<dbReference type="OrthoDB" id="9797217at2"/>
<dbReference type="UniPathway" id="UPA00258">
    <property type="reaction ID" value="UER00370"/>
</dbReference>
<dbReference type="Proteomes" id="UP000000426">
    <property type="component" value="Chromosome"/>
</dbReference>
<dbReference type="GO" id="GO:0005737">
    <property type="term" value="C:cytoplasm"/>
    <property type="evidence" value="ECO:0007669"/>
    <property type="project" value="UniProtKB-SubCell"/>
</dbReference>
<dbReference type="GO" id="GO:0016151">
    <property type="term" value="F:nickel cation binding"/>
    <property type="evidence" value="ECO:0007669"/>
    <property type="project" value="InterPro"/>
</dbReference>
<dbReference type="GO" id="GO:0009039">
    <property type="term" value="F:urease activity"/>
    <property type="evidence" value="ECO:0007669"/>
    <property type="project" value="UniProtKB-UniRule"/>
</dbReference>
<dbReference type="GO" id="GO:0043419">
    <property type="term" value="P:urea catabolic process"/>
    <property type="evidence" value="ECO:0007669"/>
    <property type="project" value="UniProtKB-UniRule"/>
</dbReference>
<dbReference type="CDD" id="cd00390">
    <property type="entry name" value="Urease_gamma"/>
    <property type="match status" value="1"/>
</dbReference>
<dbReference type="Gene3D" id="3.30.280.10">
    <property type="entry name" value="Urease, gamma-like subunit"/>
    <property type="match status" value="1"/>
</dbReference>
<dbReference type="HAMAP" id="MF_00739">
    <property type="entry name" value="Urease_gamma"/>
    <property type="match status" value="1"/>
</dbReference>
<dbReference type="InterPro" id="IPR012010">
    <property type="entry name" value="Urease_gamma"/>
</dbReference>
<dbReference type="InterPro" id="IPR002026">
    <property type="entry name" value="Urease_gamma/gamma-beta_su"/>
</dbReference>
<dbReference type="InterPro" id="IPR036463">
    <property type="entry name" value="Urease_gamma_sf"/>
</dbReference>
<dbReference type="InterPro" id="IPR050069">
    <property type="entry name" value="Urease_subunit"/>
</dbReference>
<dbReference type="NCBIfam" id="NF009712">
    <property type="entry name" value="PRK13241.1"/>
    <property type="match status" value="1"/>
</dbReference>
<dbReference type="NCBIfam" id="TIGR00193">
    <property type="entry name" value="urease_gam"/>
    <property type="match status" value="1"/>
</dbReference>
<dbReference type="PANTHER" id="PTHR33569">
    <property type="entry name" value="UREASE"/>
    <property type="match status" value="1"/>
</dbReference>
<dbReference type="PANTHER" id="PTHR33569:SF1">
    <property type="entry name" value="UREASE"/>
    <property type="match status" value="1"/>
</dbReference>
<dbReference type="Pfam" id="PF00547">
    <property type="entry name" value="Urease_gamma"/>
    <property type="match status" value="1"/>
</dbReference>
<dbReference type="PIRSF" id="PIRSF001223">
    <property type="entry name" value="Urease_gamma"/>
    <property type="match status" value="1"/>
</dbReference>
<dbReference type="SUPFAM" id="SSF54111">
    <property type="entry name" value="Urease, gamma-subunit"/>
    <property type="match status" value="1"/>
</dbReference>
<sequence length="100" mass="10998">MDLTPREKDKLLIFTAGLVAERRLARGVKLNYPEAMAYISAALLEGARDGQTVAELMHYGTTLLSRDQVMEGIAEMIPEIQVEATFPDGTKLVTVHQPIA</sequence>
<comment type="catalytic activity">
    <reaction evidence="1">
        <text>urea + 2 H2O + H(+) = hydrogencarbonate + 2 NH4(+)</text>
        <dbReference type="Rhea" id="RHEA:20557"/>
        <dbReference type="ChEBI" id="CHEBI:15377"/>
        <dbReference type="ChEBI" id="CHEBI:15378"/>
        <dbReference type="ChEBI" id="CHEBI:16199"/>
        <dbReference type="ChEBI" id="CHEBI:17544"/>
        <dbReference type="ChEBI" id="CHEBI:28938"/>
        <dbReference type="EC" id="3.5.1.5"/>
    </reaction>
</comment>
<comment type="pathway">
    <text evidence="1">Nitrogen metabolism; urea degradation; CO(2) and NH(3) from urea (urease route): step 1/1.</text>
</comment>
<comment type="subunit">
    <text evidence="1">Heterotrimer of UreA (gamma), UreB (beta) and UreC (alpha) subunits. Three heterotrimers associate to form the active enzyme.</text>
</comment>
<comment type="subcellular location">
    <subcellularLocation>
        <location evidence="1">Cytoplasm</location>
    </subcellularLocation>
</comment>
<comment type="similarity">
    <text evidence="1">Belongs to the urease gamma subunit family.</text>
</comment>
<keyword id="KW-0963">Cytoplasm</keyword>
<keyword id="KW-0378">Hydrolase</keyword>
<protein>
    <recommendedName>
        <fullName evidence="1">Urease subunit gamma</fullName>
        <ecNumber evidence="1">3.5.1.5</ecNumber>
    </recommendedName>
    <alternativeName>
        <fullName evidence="1">Urea amidohydrolase subunit gamma</fullName>
    </alternativeName>
</protein>
<organism>
    <name type="scientific">Pseudomonas syringae pv. syringae (strain B728a)</name>
    <dbReference type="NCBI Taxonomy" id="205918"/>
    <lineage>
        <taxon>Bacteria</taxon>
        <taxon>Pseudomonadati</taxon>
        <taxon>Pseudomonadota</taxon>
        <taxon>Gammaproteobacteria</taxon>
        <taxon>Pseudomonadales</taxon>
        <taxon>Pseudomonadaceae</taxon>
        <taxon>Pseudomonas</taxon>
        <taxon>Pseudomonas syringae</taxon>
    </lineage>
</organism>
<feature type="chain" id="PRO_0000234213" description="Urease subunit gamma">
    <location>
        <begin position="1"/>
        <end position="100"/>
    </location>
</feature>
<name>URE3_PSEU2</name>
<reference key="1">
    <citation type="journal article" date="2005" name="Proc. Natl. Acad. Sci. U.S.A.">
        <title>Comparison of the complete genome sequences of Pseudomonas syringae pv. syringae B728a and pv. tomato DC3000.</title>
        <authorList>
            <person name="Feil H."/>
            <person name="Feil W.S."/>
            <person name="Chain P."/>
            <person name="Larimer F."/>
            <person name="Dibartolo G."/>
            <person name="Copeland A."/>
            <person name="Lykidis A."/>
            <person name="Trong S."/>
            <person name="Nolan M."/>
            <person name="Goltsman E."/>
            <person name="Thiel J."/>
            <person name="Malfatti S."/>
            <person name="Loper J.E."/>
            <person name="Lapidus A."/>
            <person name="Detter J.C."/>
            <person name="Land M."/>
            <person name="Richardson P.M."/>
            <person name="Kyrpides N.C."/>
            <person name="Ivanova N."/>
            <person name="Lindow S.E."/>
        </authorList>
    </citation>
    <scope>NUCLEOTIDE SEQUENCE [LARGE SCALE GENOMIC DNA]</scope>
    <source>
        <strain>B728a</strain>
    </source>
</reference>
<evidence type="ECO:0000255" key="1">
    <source>
        <dbReference type="HAMAP-Rule" id="MF_00739"/>
    </source>
</evidence>